<protein>
    <recommendedName>
        <fullName evidence="1">Catalase-peroxidase</fullName>
        <shortName evidence="1">CP</shortName>
        <ecNumber evidence="1">1.11.1.21</ecNumber>
    </recommendedName>
    <alternativeName>
        <fullName evidence="1">Peroxidase/catalase</fullName>
    </alternativeName>
</protein>
<proteinExistence type="inferred from homology"/>
<feature type="chain" id="PRO_0000354714" description="Catalase-peroxidase">
    <location>
        <begin position="1"/>
        <end position="699"/>
    </location>
</feature>
<feature type="active site" description="Proton acceptor" evidence="1">
    <location>
        <position position="73"/>
    </location>
</feature>
<feature type="binding site" description="axial binding residue" evidence="1">
    <location>
        <position position="241"/>
    </location>
    <ligand>
        <name>heme b</name>
        <dbReference type="ChEBI" id="CHEBI:60344"/>
    </ligand>
    <ligandPart>
        <name>Fe</name>
        <dbReference type="ChEBI" id="CHEBI:18248"/>
    </ligandPart>
</feature>
<feature type="site" description="Transition state stabilizer" evidence="1">
    <location>
        <position position="69"/>
    </location>
</feature>
<feature type="cross-link" description="Tryptophyl-tyrosyl-methioninium (Trp-Tyr) (with M-226)" evidence="1">
    <location>
        <begin position="72"/>
        <end position="200"/>
    </location>
</feature>
<feature type="cross-link" description="Tryptophyl-tyrosyl-methioninium (Tyr-Met) (with W-72)" evidence="1">
    <location>
        <begin position="200"/>
        <end position="226"/>
    </location>
</feature>
<reference key="1">
    <citation type="journal article" date="2008" name="BMC Genomics">
        <title>The genome of Aeromonas salmonicida subsp. salmonicida A449: insights into the evolution of a fish pathogen.</title>
        <authorList>
            <person name="Reith M.E."/>
            <person name="Singh R.K."/>
            <person name="Curtis B."/>
            <person name="Boyd J.M."/>
            <person name="Bouevitch A."/>
            <person name="Kimball J."/>
            <person name="Munholland J."/>
            <person name="Murphy C."/>
            <person name="Sarty D."/>
            <person name="Williams J."/>
            <person name="Nash J.H."/>
            <person name="Johnson S.C."/>
            <person name="Brown L.L."/>
        </authorList>
    </citation>
    <scope>NUCLEOTIDE SEQUENCE [LARGE SCALE GENOMIC DNA]</scope>
    <source>
        <strain>A449</strain>
    </source>
</reference>
<accession>A4SS04</accession>
<comment type="function">
    <text evidence="1">Bifunctional enzyme with both catalase and broad-spectrum peroxidase activity.</text>
</comment>
<comment type="catalytic activity">
    <reaction evidence="1">
        <text>H2O2 + AH2 = A + 2 H2O</text>
        <dbReference type="Rhea" id="RHEA:30275"/>
        <dbReference type="ChEBI" id="CHEBI:13193"/>
        <dbReference type="ChEBI" id="CHEBI:15377"/>
        <dbReference type="ChEBI" id="CHEBI:16240"/>
        <dbReference type="ChEBI" id="CHEBI:17499"/>
        <dbReference type="EC" id="1.11.1.21"/>
    </reaction>
</comment>
<comment type="catalytic activity">
    <reaction evidence="1">
        <text>2 H2O2 = O2 + 2 H2O</text>
        <dbReference type="Rhea" id="RHEA:20309"/>
        <dbReference type="ChEBI" id="CHEBI:15377"/>
        <dbReference type="ChEBI" id="CHEBI:15379"/>
        <dbReference type="ChEBI" id="CHEBI:16240"/>
        <dbReference type="EC" id="1.11.1.21"/>
    </reaction>
</comment>
<comment type="cofactor">
    <cofactor evidence="1">
        <name>heme b</name>
        <dbReference type="ChEBI" id="CHEBI:60344"/>
    </cofactor>
    <text evidence="1">Binds 1 heme b (iron(II)-protoporphyrin IX) group per dimer.</text>
</comment>
<comment type="subunit">
    <text evidence="1">Homodimer or homotetramer.</text>
</comment>
<comment type="PTM">
    <text evidence="1">Formation of the three residue Trp-Tyr-Met cross-link is important for the catalase, but not the peroxidase activity of the enzyme.</text>
</comment>
<comment type="similarity">
    <text evidence="1">Belongs to the peroxidase family. Peroxidase/catalase subfamily.</text>
</comment>
<sequence>MSNNSERSQGKCPVMHGGTTSGEQANMAWWPKSLNLDMAALKQDVTALMTDSQDWWPADWGHYGALMIRMAWHSAGTYRIADGRGGGSTGNQRFAPLNSWPDNANLDKARRLLWPIKKKYGNKISWADLIILAGTVAYESMGLKTFGFAFGREDIWHPEKDIYWGAEKEWLAPSSKPGGRYSGERDLDNPLAAVMMGLIYVNPEGVDGNPDPLKTAKDMRVTFARMAMDDEETVALTAGGHTVGKCHGNGDARLLGPEPEGAAVEDQGLGWLNKTQRGIGRNAVTSGIEGAWTTHPTRWDNGYFYLLFNYEWELKKSPAGAWQWEPVNIREEDKPVDVEDPAIRHNPIMTDADMALKFDPEYRKIAERFRADPAAFSDAFARAWFKLTHRDLGPKTRYVGPYVPAEDLIWQDPVPAGRTDYDVAAVKASIAASGLSISDMVSTAWDSARTFRGSDLRGGANGARIRLAPQNEWEGNEPARLARVLKVLEPIAAASQISVADVIVLAGNLGVELAARAAGVEVTVPFSPGRGDASQARTDVASFDVLEPLADGYRNWLKKDYAVTAEELMLDRTQLMGLTAHEMTVLVGGMRVLGTNHGGTRHGVFTEREGALTNDYFVNLTDMANTWHPSGDRLYEVRDRKSGKVKWTATRIDLVFGSNSVLRAYAEVYAQDDNKEKFVCDFISAWNKVMNADRFDLMS</sequence>
<evidence type="ECO:0000255" key="1">
    <source>
        <dbReference type="HAMAP-Rule" id="MF_01961"/>
    </source>
</evidence>
<gene>
    <name evidence="1" type="primary">katG</name>
    <name type="ordered locus">ASA_3715</name>
</gene>
<name>KATG_AERS4</name>
<organism>
    <name type="scientific">Aeromonas salmonicida (strain A449)</name>
    <dbReference type="NCBI Taxonomy" id="382245"/>
    <lineage>
        <taxon>Bacteria</taxon>
        <taxon>Pseudomonadati</taxon>
        <taxon>Pseudomonadota</taxon>
        <taxon>Gammaproteobacteria</taxon>
        <taxon>Aeromonadales</taxon>
        <taxon>Aeromonadaceae</taxon>
        <taxon>Aeromonas</taxon>
    </lineage>
</organism>
<dbReference type="EC" id="1.11.1.21" evidence="1"/>
<dbReference type="EMBL" id="CP000644">
    <property type="protein sequence ID" value="ABO91676.1"/>
    <property type="molecule type" value="Genomic_DNA"/>
</dbReference>
<dbReference type="RefSeq" id="WP_005316054.1">
    <property type="nucleotide sequence ID" value="NC_009348.1"/>
</dbReference>
<dbReference type="SMR" id="A4SS04"/>
<dbReference type="STRING" id="29491.GCA_000820065_04292"/>
<dbReference type="KEGG" id="asa:ASA_3715"/>
<dbReference type="PATRIC" id="fig|382245.13.peg.3690"/>
<dbReference type="eggNOG" id="COG0376">
    <property type="taxonomic scope" value="Bacteria"/>
</dbReference>
<dbReference type="HOGENOM" id="CLU_025424_2_0_6"/>
<dbReference type="Proteomes" id="UP000000225">
    <property type="component" value="Chromosome"/>
</dbReference>
<dbReference type="GO" id="GO:0005829">
    <property type="term" value="C:cytosol"/>
    <property type="evidence" value="ECO:0007669"/>
    <property type="project" value="TreeGrafter"/>
</dbReference>
<dbReference type="GO" id="GO:0004096">
    <property type="term" value="F:catalase activity"/>
    <property type="evidence" value="ECO:0007669"/>
    <property type="project" value="UniProtKB-UniRule"/>
</dbReference>
<dbReference type="GO" id="GO:0020037">
    <property type="term" value="F:heme binding"/>
    <property type="evidence" value="ECO:0007669"/>
    <property type="project" value="InterPro"/>
</dbReference>
<dbReference type="GO" id="GO:0046872">
    <property type="term" value="F:metal ion binding"/>
    <property type="evidence" value="ECO:0007669"/>
    <property type="project" value="UniProtKB-KW"/>
</dbReference>
<dbReference type="GO" id="GO:0070301">
    <property type="term" value="P:cellular response to hydrogen peroxide"/>
    <property type="evidence" value="ECO:0007669"/>
    <property type="project" value="TreeGrafter"/>
</dbReference>
<dbReference type="GO" id="GO:0042744">
    <property type="term" value="P:hydrogen peroxide catabolic process"/>
    <property type="evidence" value="ECO:0007669"/>
    <property type="project" value="UniProtKB-KW"/>
</dbReference>
<dbReference type="CDD" id="cd00649">
    <property type="entry name" value="catalase_peroxidase_1"/>
    <property type="match status" value="1"/>
</dbReference>
<dbReference type="CDD" id="cd08200">
    <property type="entry name" value="catalase_peroxidase_2"/>
    <property type="match status" value="1"/>
</dbReference>
<dbReference type="FunFam" id="1.10.420.10:FF:000002">
    <property type="entry name" value="Catalase-peroxidase"/>
    <property type="match status" value="1"/>
</dbReference>
<dbReference type="FunFam" id="1.10.420.10:FF:000004">
    <property type="entry name" value="Catalase-peroxidase"/>
    <property type="match status" value="1"/>
</dbReference>
<dbReference type="Gene3D" id="1.10.520.10">
    <property type="match status" value="2"/>
</dbReference>
<dbReference type="Gene3D" id="1.10.420.10">
    <property type="entry name" value="Peroxidase, domain 2"/>
    <property type="match status" value="2"/>
</dbReference>
<dbReference type="HAMAP" id="MF_01961">
    <property type="entry name" value="Catal_peroxid"/>
    <property type="match status" value="1"/>
</dbReference>
<dbReference type="InterPro" id="IPR000763">
    <property type="entry name" value="Catalase_peroxidase"/>
</dbReference>
<dbReference type="InterPro" id="IPR002016">
    <property type="entry name" value="Haem_peroxidase"/>
</dbReference>
<dbReference type="InterPro" id="IPR010255">
    <property type="entry name" value="Haem_peroxidase_sf"/>
</dbReference>
<dbReference type="InterPro" id="IPR019794">
    <property type="entry name" value="Peroxidases_AS"/>
</dbReference>
<dbReference type="NCBIfam" id="TIGR00198">
    <property type="entry name" value="cat_per_HPI"/>
    <property type="match status" value="1"/>
</dbReference>
<dbReference type="NCBIfam" id="NF011635">
    <property type="entry name" value="PRK15061.1"/>
    <property type="match status" value="1"/>
</dbReference>
<dbReference type="PANTHER" id="PTHR30555:SF6">
    <property type="entry name" value="CATALASE-PEROXIDASE"/>
    <property type="match status" value="1"/>
</dbReference>
<dbReference type="PANTHER" id="PTHR30555">
    <property type="entry name" value="HYDROPEROXIDASE I, BIFUNCTIONAL CATALASE-PEROXIDASE"/>
    <property type="match status" value="1"/>
</dbReference>
<dbReference type="Pfam" id="PF00141">
    <property type="entry name" value="peroxidase"/>
    <property type="match status" value="2"/>
</dbReference>
<dbReference type="PRINTS" id="PR00460">
    <property type="entry name" value="BPEROXIDASE"/>
</dbReference>
<dbReference type="PRINTS" id="PR00458">
    <property type="entry name" value="PEROXIDASE"/>
</dbReference>
<dbReference type="SUPFAM" id="SSF48113">
    <property type="entry name" value="Heme-dependent peroxidases"/>
    <property type="match status" value="2"/>
</dbReference>
<dbReference type="PROSITE" id="PS00436">
    <property type="entry name" value="PEROXIDASE_2"/>
    <property type="match status" value="1"/>
</dbReference>
<dbReference type="PROSITE" id="PS50873">
    <property type="entry name" value="PEROXIDASE_4"/>
    <property type="match status" value="1"/>
</dbReference>
<keyword id="KW-0349">Heme</keyword>
<keyword id="KW-0376">Hydrogen peroxide</keyword>
<keyword id="KW-0408">Iron</keyword>
<keyword id="KW-0479">Metal-binding</keyword>
<keyword id="KW-0560">Oxidoreductase</keyword>
<keyword id="KW-0575">Peroxidase</keyword>